<gene>
    <name type="ORF">F11A10.5</name>
</gene>
<accession>Q19337</accession>
<reference key="1">
    <citation type="journal article" date="1998" name="Science">
        <title>Genome sequence of the nematode C. elegans: a platform for investigating biology.</title>
        <authorList>
            <consortium name="The C. elegans sequencing consortium"/>
        </authorList>
    </citation>
    <scope>NUCLEOTIDE SEQUENCE [LARGE SCALE GENOMIC DNA]</scope>
    <source>
        <strain>Bristol N2</strain>
    </source>
</reference>
<keyword id="KW-0175">Coiled coil</keyword>
<keyword id="KW-0472">Membrane</keyword>
<keyword id="KW-1185">Reference proteome</keyword>
<keyword id="KW-0812">Transmembrane</keyword>
<keyword id="KW-1133">Transmembrane helix</keyword>
<comment type="subcellular location">
    <subcellularLocation>
        <location evidence="2">Membrane</location>
        <topology evidence="2">Multi-pass membrane protein</topology>
    </subcellularLocation>
</comment>
<comment type="similarity">
    <text evidence="2">Belongs to the ST7 family.</text>
</comment>
<protein>
    <recommendedName>
        <fullName>Protein ST7 homolog</fullName>
    </recommendedName>
</protein>
<proteinExistence type="inferred from homology"/>
<dbReference type="EMBL" id="Z68297">
    <property type="protein sequence ID" value="CAA92595.1"/>
    <property type="molecule type" value="Genomic_DNA"/>
</dbReference>
<dbReference type="PIR" id="T20736">
    <property type="entry name" value="T20736"/>
</dbReference>
<dbReference type="RefSeq" id="NP_502294.1">
    <property type="nucleotide sequence ID" value="NM_069893.5"/>
</dbReference>
<dbReference type="SMR" id="Q19337"/>
<dbReference type="BioGRID" id="43245">
    <property type="interactions" value="1"/>
</dbReference>
<dbReference type="FunCoup" id="Q19337">
    <property type="interactions" value="2579"/>
</dbReference>
<dbReference type="STRING" id="6239.F11A10.5.1"/>
<dbReference type="PaxDb" id="6239-F11A10.5"/>
<dbReference type="PeptideAtlas" id="Q19337"/>
<dbReference type="EnsemblMetazoa" id="F11A10.5.1">
    <property type="protein sequence ID" value="F11A10.5.1"/>
    <property type="gene ID" value="WBGene00008686"/>
</dbReference>
<dbReference type="EnsemblMetazoa" id="F11A10.5.2">
    <property type="protein sequence ID" value="F11A10.5.2"/>
    <property type="gene ID" value="WBGene00008686"/>
</dbReference>
<dbReference type="GeneID" id="178152"/>
<dbReference type="KEGG" id="cel:CELE_F11A10.5"/>
<dbReference type="UCSC" id="F11A10.5">
    <property type="organism name" value="c. elegans"/>
</dbReference>
<dbReference type="AGR" id="WB:WBGene00008686"/>
<dbReference type="CTD" id="178152"/>
<dbReference type="WormBase" id="F11A10.5">
    <property type="protein sequence ID" value="CE03185"/>
    <property type="gene ID" value="WBGene00008686"/>
</dbReference>
<dbReference type="eggNOG" id="KOG3807">
    <property type="taxonomic scope" value="Eukaryota"/>
</dbReference>
<dbReference type="GeneTree" id="ENSGT00390000000873"/>
<dbReference type="HOGENOM" id="CLU_035578_2_0_1"/>
<dbReference type="InParanoid" id="Q19337"/>
<dbReference type="OMA" id="QDYEIMQ"/>
<dbReference type="OrthoDB" id="5914722at2759"/>
<dbReference type="PhylomeDB" id="Q19337"/>
<dbReference type="PRO" id="PR:Q19337"/>
<dbReference type="Proteomes" id="UP000001940">
    <property type="component" value="Chromosome IV"/>
</dbReference>
<dbReference type="Bgee" id="WBGene00008686">
    <property type="expression patterns" value="Expressed in embryo and 4 other cell types or tissues"/>
</dbReference>
<dbReference type="GO" id="GO:0016020">
    <property type="term" value="C:membrane"/>
    <property type="evidence" value="ECO:0007669"/>
    <property type="project" value="UniProtKB-SubCell"/>
</dbReference>
<dbReference type="CDD" id="cd11557">
    <property type="entry name" value="ST7"/>
    <property type="match status" value="1"/>
</dbReference>
<dbReference type="Gene3D" id="1.25.40.10">
    <property type="entry name" value="Tetratricopeptide repeat domain"/>
    <property type="match status" value="1"/>
</dbReference>
<dbReference type="InterPro" id="IPR007311">
    <property type="entry name" value="ST7"/>
</dbReference>
<dbReference type="InterPro" id="IPR011990">
    <property type="entry name" value="TPR-like_helical_dom_sf"/>
</dbReference>
<dbReference type="PANTHER" id="PTHR12745:SF6">
    <property type="entry name" value="PROTEIN ST7 HOMOLOG"/>
    <property type="match status" value="1"/>
</dbReference>
<dbReference type="PANTHER" id="PTHR12745">
    <property type="entry name" value="SUPPRESSION OF TUMORIGENICITY 7"/>
    <property type="match status" value="1"/>
</dbReference>
<dbReference type="Pfam" id="PF04184">
    <property type="entry name" value="ST7"/>
    <property type="match status" value="1"/>
</dbReference>
<dbReference type="SUPFAM" id="SSF48452">
    <property type="entry name" value="TPR-like"/>
    <property type="match status" value="1"/>
</dbReference>
<evidence type="ECO:0000255" key="1"/>
<evidence type="ECO:0000305" key="2"/>
<organism>
    <name type="scientific">Caenorhabditis elegans</name>
    <dbReference type="NCBI Taxonomy" id="6239"/>
    <lineage>
        <taxon>Eukaryota</taxon>
        <taxon>Metazoa</taxon>
        <taxon>Ecdysozoa</taxon>
        <taxon>Nematoda</taxon>
        <taxon>Chromadorea</taxon>
        <taxon>Rhabditida</taxon>
        <taxon>Rhabditina</taxon>
        <taxon>Rhabditomorpha</taxon>
        <taxon>Rhabditoidea</taxon>
        <taxon>Rhabditidae</taxon>
        <taxon>Peloderinae</taxon>
        <taxon>Caenorhabditis</taxon>
    </lineage>
</organism>
<sequence>MACSWTFLWLLWIALVAVLLFALRGPLKISESLESVTATSYFNNLTPKFYVALTGTSSLVSGIILIFEWWYFKNNAGIDAGDEEGSDNDESIENTKTVPECKVWRNPMALFRAAEYNRFRKETNSEPLTYYDMNLSAQDHQSLFMCDEDQGRAEYEIMQVAWRERESEERIQTARAALAINPECASALVLLAEEESETVSQAENLLRRALRAIESTLNSYSNNQIASYAQNGDAVRKRDLTIQTYIKRRLAMCARKQGRLREAIKGFRDLSRDQSLSTLLSVQDNLIEACLEVQAYADVQNLLVRYDGYGAPCSYELREPRSAAMSYTSALLKVRAVAENFRCAADSSIRRGLSSAEQTAIEALTRAMEFNPHVPPYLLELRSMIMPPEHFLKRGDSEALAYAFFHIQHWKRIDGALQLLSIVWKDFVPKVSKDKNAFSSQLESADKELLPSWHEQSVFPKTEGTLMMLLQTFICLAICILAVLAQQFPASSGEIFRTAATIGMQFYENSVYTVSQWAPGNIIPYLASKQVPVPEL</sequence>
<name>ST7_CAEEL</name>
<feature type="chain" id="PRO_0000339222" description="Protein ST7 homolog">
    <location>
        <begin position="1"/>
        <end position="536"/>
    </location>
</feature>
<feature type="transmembrane region" description="Helical" evidence="1">
    <location>
        <begin position="3"/>
        <end position="23"/>
    </location>
</feature>
<feature type="transmembrane region" description="Helical" evidence="1">
    <location>
        <begin position="49"/>
        <end position="69"/>
    </location>
</feature>
<feature type="transmembrane region" description="Helical" evidence="1">
    <location>
        <begin position="465"/>
        <end position="485"/>
    </location>
</feature>
<feature type="coiled-coil region" evidence="1">
    <location>
        <begin position="191"/>
        <end position="218"/>
    </location>
</feature>